<feature type="chain" id="PRO_1000055333" description="Large ribosomal subunit protein uL13">
    <location>
        <begin position="1"/>
        <end position="142"/>
    </location>
</feature>
<protein>
    <recommendedName>
        <fullName evidence="1">Large ribosomal subunit protein uL13</fullName>
    </recommendedName>
    <alternativeName>
        <fullName evidence="2">50S ribosomal protein L13</fullName>
    </alternativeName>
</protein>
<organism>
    <name type="scientific">Acinetobacter baumannii (strain ATCC 17978 / DSM 105126 / CIP 53.77 / LMG 1025 / NCDC KC755 / 5377)</name>
    <dbReference type="NCBI Taxonomy" id="400667"/>
    <lineage>
        <taxon>Bacteria</taxon>
        <taxon>Pseudomonadati</taxon>
        <taxon>Pseudomonadota</taxon>
        <taxon>Gammaproteobacteria</taxon>
        <taxon>Moraxellales</taxon>
        <taxon>Moraxellaceae</taxon>
        <taxon>Acinetobacter</taxon>
        <taxon>Acinetobacter calcoaceticus/baumannii complex</taxon>
    </lineage>
</organism>
<name>RL13_ACIBT</name>
<evidence type="ECO:0000255" key="1">
    <source>
        <dbReference type="HAMAP-Rule" id="MF_01366"/>
    </source>
</evidence>
<evidence type="ECO:0000305" key="2"/>
<accession>A3M907</accession>
<gene>
    <name evidence="1" type="primary">rplM</name>
    <name type="ordered locus">A1S_3000</name>
</gene>
<keyword id="KW-0687">Ribonucleoprotein</keyword>
<keyword id="KW-0689">Ribosomal protein</keyword>
<sequence>MKTLSAKPAEVQHDWFVVDATGKTLGRLATEIARRLRGKHKTSYTPHVDTGDYIIVINAEQVQVTGNKALDKKYYRHTEFPGGLKETNFEKLVAHKPEEIFERAVKGMLPKGPLGYAMIKKMKVYAGSEHPHAAQQPQVLDI</sequence>
<comment type="function">
    <text evidence="1">This protein is one of the early assembly proteins of the 50S ribosomal subunit, although it is not seen to bind rRNA by itself. It is important during the early stages of 50S assembly.</text>
</comment>
<comment type="subunit">
    <text evidence="1">Part of the 50S ribosomal subunit.</text>
</comment>
<comment type="similarity">
    <text evidence="1">Belongs to the universal ribosomal protein uL13 family.</text>
</comment>
<proteinExistence type="inferred from homology"/>
<dbReference type="EMBL" id="CP000521">
    <property type="protein sequence ID" value="ABO13401.1"/>
    <property type="molecule type" value="Genomic_DNA"/>
</dbReference>
<dbReference type="RefSeq" id="WP_000854895.1">
    <property type="nucleotide sequence ID" value="NZ_CP053098.1"/>
</dbReference>
<dbReference type="SMR" id="A3M907"/>
<dbReference type="KEGG" id="acb:A1S_3000"/>
<dbReference type="HOGENOM" id="CLU_082184_2_2_6"/>
<dbReference type="GO" id="GO:0022625">
    <property type="term" value="C:cytosolic large ribosomal subunit"/>
    <property type="evidence" value="ECO:0007669"/>
    <property type="project" value="TreeGrafter"/>
</dbReference>
<dbReference type="GO" id="GO:0003729">
    <property type="term" value="F:mRNA binding"/>
    <property type="evidence" value="ECO:0007669"/>
    <property type="project" value="TreeGrafter"/>
</dbReference>
<dbReference type="GO" id="GO:0003735">
    <property type="term" value="F:structural constituent of ribosome"/>
    <property type="evidence" value="ECO:0007669"/>
    <property type="project" value="InterPro"/>
</dbReference>
<dbReference type="GO" id="GO:0017148">
    <property type="term" value="P:negative regulation of translation"/>
    <property type="evidence" value="ECO:0007669"/>
    <property type="project" value="TreeGrafter"/>
</dbReference>
<dbReference type="GO" id="GO:0006412">
    <property type="term" value="P:translation"/>
    <property type="evidence" value="ECO:0007669"/>
    <property type="project" value="UniProtKB-UniRule"/>
</dbReference>
<dbReference type="CDD" id="cd00392">
    <property type="entry name" value="Ribosomal_L13"/>
    <property type="match status" value="1"/>
</dbReference>
<dbReference type="FunFam" id="3.90.1180.10:FF:000001">
    <property type="entry name" value="50S ribosomal protein L13"/>
    <property type="match status" value="1"/>
</dbReference>
<dbReference type="Gene3D" id="3.90.1180.10">
    <property type="entry name" value="Ribosomal protein L13"/>
    <property type="match status" value="1"/>
</dbReference>
<dbReference type="HAMAP" id="MF_01366">
    <property type="entry name" value="Ribosomal_uL13"/>
    <property type="match status" value="1"/>
</dbReference>
<dbReference type="InterPro" id="IPR005822">
    <property type="entry name" value="Ribosomal_uL13"/>
</dbReference>
<dbReference type="InterPro" id="IPR005823">
    <property type="entry name" value="Ribosomal_uL13_bac-type"/>
</dbReference>
<dbReference type="InterPro" id="IPR036899">
    <property type="entry name" value="Ribosomal_uL13_sf"/>
</dbReference>
<dbReference type="NCBIfam" id="TIGR01066">
    <property type="entry name" value="rplM_bact"/>
    <property type="match status" value="1"/>
</dbReference>
<dbReference type="PANTHER" id="PTHR11545:SF2">
    <property type="entry name" value="LARGE RIBOSOMAL SUBUNIT PROTEIN UL13M"/>
    <property type="match status" value="1"/>
</dbReference>
<dbReference type="PANTHER" id="PTHR11545">
    <property type="entry name" value="RIBOSOMAL PROTEIN L13"/>
    <property type="match status" value="1"/>
</dbReference>
<dbReference type="Pfam" id="PF00572">
    <property type="entry name" value="Ribosomal_L13"/>
    <property type="match status" value="1"/>
</dbReference>
<dbReference type="PIRSF" id="PIRSF002181">
    <property type="entry name" value="Ribosomal_L13"/>
    <property type="match status" value="1"/>
</dbReference>
<dbReference type="SUPFAM" id="SSF52161">
    <property type="entry name" value="Ribosomal protein L13"/>
    <property type="match status" value="1"/>
</dbReference>
<reference key="1">
    <citation type="journal article" date="2007" name="Genes Dev.">
        <title>New insights into Acinetobacter baumannii pathogenesis revealed by high-density pyrosequencing and transposon mutagenesis.</title>
        <authorList>
            <person name="Smith M.G."/>
            <person name="Gianoulis T.A."/>
            <person name="Pukatzki S."/>
            <person name="Mekalanos J.J."/>
            <person name="Ornston L.N."/>
            <person name="Gerstein M."/>
            <person name="Snyder M."/>
        </authorList>
    </citation>
    <scope>NUCLEOTIDE SEQUENCE [LARGE SCALE GENOMIC DNA]</scope>
    <source>
        <strain>ATCC 17978 / DSM 105126 / CIP 53.77 / LMG 1025 / NCDC KC755 / 5377</strain>
    </source>
</reference>